<protein>
    <recommendedName>
        <fullName>Probable inactive serine/threonine-protein kinase roco10</fullName>
    </recommendedName>
    <alternativeName>
        <fullName>Ras of complex proteins and C-terminal of roc 10</fullName>
    </alternativeName>
</protein>
<sequence length="2646" mass="293356">MSGLLDDDEIIQVSPDSIITSSIGSASLNYSVNGADDNKSIPPSSPQQNLLENDTLSPPPPLPTQTINTSSSPPPPTIITTTTTTTTTTAMSPVATTTTSSPTISASPTYITSPSGTRLSGGNTFNAQQLKSLLLASNIPIPPVPTSPTSTPPNLQTNNNNKQDKDKDNETFATLINEELPLTTEEKENIKAQKKDLISSLPEVPLFISPSPTLSRNNNGKRNSGGNKPPLSPIKISSTSAAGDVSPSISLNNSGSGIYNSTSPSGTASTQTLNILSQLQQQQRNGNNNNNNNNNNNYLSSPTMPALNKHSTHGNFHNSVAGYGNNNNNNNNNNKQPQHPMNGNHSPSNGTSGSLSMSGSGIDNGGNNNNNSNTHGSSSNQSSGVTSPIIQSTSPQPPHLTGLNSDSQMPLSSSPTMGYPRGNHNKKTSASAVSSQNRSPLMNSTGVSSSSSGVKQAGAGEKVMQFLGKMSLSKERMSKLVSQSKEQYKTPSSPYQQSTSSSISSGSGTISGHTSPNSLNSVQVVPFEGIFGIPLRVILRYPNESGNQIPSILNSIFTILESSSALSTNRLFYGDYNTSTSNLASSISPISTAANTTIPTISVPTSPNLSSSLSSSSSSGSSGNSSPNIINQLQQQQQPQPTTTTTTNTNTSPHQYLSQKSIKLEVENICNQYDQGIEVSLKKCNVHVVSEILIEFFNRLPEPIISVEFYETLLNYYQTETLLHLMIRKMNNPNKSILCRLMKYLKDIMVYTNFNDVTLELLVERFHKFILRPTIGTIAQSKEISESHLKTIKDIVTMFIQQADILFQSPEERMNTDDAQILYIEEVLTSTQKSQHQSSVGNLWLFHKQIVWRPKVNIDHGEPDLAILFSSILKIVLYTPPQSSSSSSSSSISNSSSASSSSSSTPSISSTSLSSSLKVLPNFTVYCSSDTKTVITFSFQSPSTCKLIYAYINSVTKSISQLNRIIPQKLDMFSLELESLPNEIKQLKDLQELNLNRNKFKLLPGDLARLTSLRTICIEENNLTEISSEMADFLGTRLSNLENVTLSSNRLVVLPPLYTWLKLKTLNISNNYLTKLPIDIFQIPTLEVLRVSNNDLDDNGIPKICTSTKLRSLDLRKNHLTSIPEGIINLVELQVLTLADNQISHLTSDIQKLTSLTELNLNGNQIQSLPPQLLLLTNLKKLYLDNNQLQSISSAIHRMQSLIELRLTNNNISRLPPGIVALKKLNSLELTGNKPLKDNIPEKYIQKGKEGIFSFFSETMRTNVPCYRTRIIMLGDKSTGKSNLIKCLKKLPKSSFSSSSSNLPSLNNLNSNNSNNSGNSKTNILDIQDWQCPINVDGPDGKKKKTITIHLWEFEGMQNDISHVFFVPNIIYTVCFNLSKFGSSKSNEQKITSYLHGINNYDKKATIIIIGTHLDEISSNSKKQVDKVFDCLSLKYKQLFPTLNLVFHAVSTLKSDADGIRKLRRDIKQMIAKNPILKQTYPASFMFLEDYLKEESNLMSPPLVTKKTLQQMARTMELHNEPHFTQLKSLFNSLGSIALFEQFIRMEPGSTPQKTEMIALNPIWIAKAIASLVCFNPQNLPFNVSVSAEEANDASHDSTITGILPHRVLRYVWGTNSKYYVPERFFSLFLSLLESNDLAINIYSLEVNNNNNNNSNGNNVGRGRSGSRSMSIHEANRSNSYFGVNLNNTSSLSSFTSNQKVRNGRSSSFNARVGWALVSSLLAPPPQLSINGNCSISSNSSSSSSSLSNALNLNNISSMIPIIDLPGIWEAFPESPEIHQFSRRFSLDVIPNGLFGRLLSRLMQHAHLYKCWKDLAILVPEIASMSTTSSSSSSSTANSTTTTSATTLQSLASGSSNNTLQQQFREERILVNVDHDSNTIEITIRFIRPSTLSSQVYSIFESLVSKWYKVSFKTFIPCSHCIEKKIVTPHLFKLEECEAQIFKGELGIYCQYKPNNNNSSNDTSSPIASSRSNPKISRKDSKNLIQSNNNDNNNSLSKKDLKELAKQNKEKEKEKEKDKDKEKEKERKVEIYRDDSFLVPIRSLLLDQFSICHFIKEIDYREIEVLPDHSNQNENGTSTQSMMGMYGKQFVNIKVFNAPLLGADFQNNCARILSSFRHEALSLYNFRHSNVLSIIGISMNPIAIITENPTFGSKGSTTLSEYIQDRQKHPEIPWNIKLKIALDIARAMDKLNSHSPPFLLTNLTSSGIILEKSNDHQSSGNGLEIEPFVNAKIIDFSQSSFLPSLFPTSTTPKSYHSPEVLQKLNYHENSDVYSFGIILYELLTRSIAFQDHDRFSNIVISGQRPSIPLDCLPSFADLIKDCWSGEPLNRPSPSKIISQLYTIKKEIESKEHSYKSLASDNNIYSDHPLPSGGSIIYQDKIIHFGGWNNSSKPHSKVFALNLSSMLFEDKLMVVLNNKQSTTYKAFYTHMQSEFNEENLMFYEAIKTFKSLPNQTPDDREIIKIQSKKIYQVFIGENAPKEINLPFLLKKELKNKIDFPDGPSVTVFNDTLTFVISSIEDSFHRFKFTVPTTNKNGWVEIECKGIPPLPMVGHSSILWNNSLIVIGGWFNKARLLNQIHILNLETFEWNQFVCTGDIPPSSIAALNITLHGDYLLAYYERTDSIKQQIFRLSLDSFIWFSLKLSNV</sequence>
<feature type="chain" id="PRO_0000358896" description="Probable inactive serine/threonine-protein kinase roco10">
    <location>
        <begin position="1"/>
        <end position="2646"/>
    </location>
</feature>
<feature type="domain" description="Rho-GAP" evidence="3">
    <location>
        <begin position="585"/>
        <end position="807"/>
    </location>
</feature>
<feature type="repeat" description="LRR 1">
    <location>
        <begin position="968"/>
        <end position="987"/>
    </location>
</feature>
<feature type="repeat" description="LRR 2">
    <location>
        <begin position="989"/>
        <end position="1011"/>
    </location>
</feature>
<feature type="repeat" description="LRR 3">
    <location>
        <begin position="1012"/>
        <end position="1033"/>
    </location>
</feature>
<feature type="repeat" description="LRR 4">
    <location>
        <begin position="1040"/>
        <end position="1061"/>
    </location>
</feature>
<feature type="repeat" description="LRR 5">
    <location>
        <begin position="1062"/>
        <end position="1083"/>
    </location>
</feature>
<feature type="repeat" description="LRR 6">
    <location>
        <begin position="1085"/>
        <end position="1108"/>
    </location>
</feature>
<feature type="repeat" description="LRR 7">
    <location>
        <begin position="1109"/>
        <end position="1131"/>
    </location>
</feature>
<feature type="repeat" description="LRR 8">
    <location>
        <begin position="1132"/>
        <end position="1154"/>
    </location>
</feature>
<feature type="repeat" description="LRR 9">
    <location>
        <begin position="1155"/>
        <end position="1176"/>
    </location>
</feature>
<feature type="repeat" description="LRR 10">
    <location>
        <begin position="1178"/>
        <end position="1199"/>
    </location>
</feature>
<feature type="repeat" description="LRR 11">
    <location>
        <begin position="1201"/>
        <end position="1222"/>
    </location>
</feature>
<feature type="repeat" description="LRR 12">
    <location>
        <begin position="1224"/>
        <end position="1247"/>
    </location>
</feature>
<feature type="repeat" description="LRR 13">
    <location>
        <begin position="1248"/>
        <end position="1270"/>
    </location>
</feature>
<feature type="domain" description="Roc" evidence="4">
    <location>
        <begin position="1262"/>
        <end position="1474"/>
    </location>
</feature>
<feature type="repeat" description="LRR 14">
    <location>
        <begin position="1271"/>
        <end position="1298"/>
    </location>
</feature>
<feature type="repeat" description="LRR 15">
    <location>
        <begin position="1303"/>
        <end position="1327"/>
    </location>
</feature>
<feature type="domain" description="Protein kinase" evidence="1">
    <location>
        <begin position="2049"/>
        <end position="2342"/>
    </location>
</feature>
<feature type="domain" description="RGS" evidence="2">
    <location>
        <begin position="2412"/>
        <end position="2536"/>
    </location>
</feature>
<feature type="region of interest" description="Disordered" evidence="5">
    <location>
        <begin position="28"/>
        <end position="122"/>
    </location>
</feature>
<feature type="region of interest" description="Disordered" evidence="5">
    <location>
        <begin position="138"/>
        <end position="168"/>
    </location>
</feature>
<feature type="region of interest" description="Disordered" evidence="5">
    <location>
        <begin position="205"/>
        <end position="248"/>
    </location>
</feature>
<feature type="region of interest" description="Disordered" evidence="5">
    <location>
        <begin position="281"/>
        <end position="457"/>
    </location>
</feature>
<feature type="region of interest" description="Disordered" evidence="5">
    <location>
        <begin position="477"/>
        <end position="516"/>
    </location>
</feature>
<feature type="region of interest" description="Disordered" evidence="5">
    <location>
        <begin position="605"/>
        <end position="656"/>
    </location>
</feature>
<feature type="region of interest" description="Disordered" evidence="5">
    <location>
        <begin position="882"/>
        <end position="907"/>
    </location>
</feature>
<feature type="region of interest" description="Disordered" evidence="5">
    <location>
        <begin position="1293"/>
        <end position="1317"/>
    </location>
</feature>
<feature type="region of interest" description="Disordered" evidence="5">
    <location>
        <begin position="1651"/>
        <end position="1670"/>
    </location>
</feature>
<feature type="region of interest" description="Disordered" evidence="5">
    <location>
        <begin position="1957"/>
        <end position="2026"/>
    </location>
</feature>
<feature type="compositionally biased region" description="Polar residues" evidence="5">
    <location>
        <begin position="46"/>
        <end position="56"/>
    </location>
</feature>
<feature type="compositionally biased region" description="Low complexity" evidence="5">
    <location>
        <begin position="78"/>
        <end position="115"/>
    </location>
</feature>
<feature type="compositionally biased region" description="Low complexity" evidence="5">
    <location>
        <begin position="147"/>
        <end position="161"/>
    </location>
</feature>
<feature type="compositionally biased region" description="Low complexity" evidence="5">
    <location>
        <begin position="215"/>
        <end position="228"/>
    </location>
</feature>
<feature type="compositionally biased region" description="Polar residues" evidence="5">
    <location>
        <begin position="235"/>
        <end position="248"/>
    </location>
</feature>
<feature type="compositionally biased region" description="Low complexity" evidence="5">
    <location>
        <begin position="285"/>
        <end position="297"/>
    </location>
</feature>
<feature type="compositionally biased region" description="Low complexity" evidence="5">
    <location>
        <begin position="325"/>
        <end position="334"/>
    </location>
</feature>
<feature type="compositionally biased region" description="Polar residues" evidence="5">
    <location>
        <begin position="335"/>
        <end position="345"/>
    </location>
</feature>
<feature type="compositionally biased region" description="Low complexity" evidence="5">
    <location>
        <begin position="346"/>
        <end position="394"/>
    </location>
</feature>
<feature type="compositionally biased region" description="Polar residues" evidence="5">
    <location>
        <begin position="402"/>
        <end position="416"/>
    </location>
</feature>
<feature type="compositionally biased region" description="Polar residues" evidence="5">
    <location>
        <begin position="428"/>
        <end position="443"/>
    </location>
</feature>
<feature type="compositionally biased region" description="Low complexity" evidence="5">
    <location>
        <begin position="444"/>
        <end position="454"/>
    </location>
</feature>
<feature type="compositionally biased region" description="Low complexity" evidence="5">
    <location>
        <begin position="491"/>
        <end position="516"/>
    </location>
</feature>
<feature type="compositionally biased region" description="Low complexity" evidence="5">
    <location>
        <begin position="605"/>
        <end position="627"/>
    </location>
</feature>
<feature type="compositionally biased region" description="Low complexity" evidence="5">
    <location>
        <begin position="634"/>
        <end position="651"/>
    </location>
</feature>
<feature type="compositionally biased region" description="Low complexity" evidence="5">
    <location>
        <begin position="883"/>
        <end position="907"/>
    </location>
</feature>
<feature type="compositionally biased region" description="Low complexity" evidence="5">
    <location>
        <begin position="1651"/>
        <end position="1669"/>
    </location>
</feature>
<feature type="compositionally biased region" description="Polar residues" evidence="5">
    <location>
        <begin position="1966"/>
        <end position="1975"/>
    </location>
</feature>
<feature type="compositionally biased region" description="Low complexity" evidence="5">
    <location>
        <begin position="1983"/>
        <end position="1996"/>
    </location>
</feature>
<feature type="compositionally biased region" description="Basic and acidic residues" evidence="5">
    <location>
        <begin position="1997"/>
        <end position="2026"/>
    </location>
</feature>
<feature type="binding site" evidence="1">
    <location>
        <begin position="2055"/>
        <end position="2063"/>
    </location>
    <ligand>
        <name>ATP</name>
        <dbReference type="ChEBI" id="CHEBI:30616"/>
    </ligand>
</feature>
<feature type="binding site" evidence="1">
    <location>
        <position position="2094"/>
    </location>
    <ligand>
        <name>ATP</name>
        <dbReference type="ChEBI" id="CHEBI:30616"/>
    </ligand>
</feature>
<feature type="site" description="Arginine finger; crucial for GTP hydrolysis by stabilizing the transition state" evidence="3">
    <location>
        <position position="620"/>
    </location>
</feature>
<reference key="1">
    <citation type="journal article" date="2003" name="Biochim. Biophys. Acta">
        <title>Roc, a Ras/GTPase domain in complex proteins.</title>
        <authorList>
            <person name="Bosgraaf L."/>
            <person name="van Haastert P.J.M."/>
        </authorList>
    </citation>
    <scope>NUCLEOTIDE SEQUENCE [GENOMIC DNA]</scope>
</reference>
<reference key="2">
    <citation type="journal article" date="2005" name="Nature">
        <title>The genome of the social amoeba Dictyostelium discoideum.</title>
        <authorList>
            <person name="Eichinger L."/>
            <person name="Pachebat J.A."/>
            <person name="Gloeckner G."/>
            <person name="Rajandream M.A."/>
            <person name="Sucgang R."/>
            <person name="Berriman M."/>
            <person name="Song J."/>
            <person name="Olsen R."/>
            <person name="Szafranski K."/>
            <person name="Xu Q."/>
            <person name="Tunggal B."/>
            <person name="Kummerfeld S."/>
            <person name="Madera M."/>
            <person name="Konfortov B.A."/>
            <person name="Rivero F."/>
            <person name="Bankier A.T."/>
            <person name="Lehmann R."/>
            <person name="Hamlin N."/>
            <person name="Davies R."/>
            <person name="Gaudet P."/>
            <person name="Fey P."/>
            <person name="Pilcher K."/>
            <person name="Chen G."/>
            <person name="Saunders D."/>
            <person name="Sodergren E.J."/>
            <person name="Davis P."/>
            <person name="Kerhornou A."/>
            <person name="Nie X."/>
            <person name="Hall N."/>
            <person name="Anjard C."/>
            <person name="Hemphill L."/>
            <person name="Bason N."/>
            <person name="Farbrother P."/>
            <person name="Desany B."/>
            <person name="Just E."/>
            <person name="Morio T."/>
            <person name="Rost R."/>
            <person name="Churcher C.M."/>
            <person name="Cooper J."/>
            <person name="Haydock S."/>
            <person name="van Driessche N."/>
            <person name="Cronin A."/>
            <person name="Goodhead I."/>
            <person name="Muzny D.M."/>
            <person name="Mourier T."/>
            <person name="Pain A."/>
            <person name="Lu M."/>
            <person name="Harper D."/>
            <person name="Lindsay R."/>
            <person name="Hauser H."/>
            <person name="James K.D."/>
            <person name="Quiles M."/>
            <person name="Madan Babu M."/>
            <person name="Saito T."/>
            <person name="Buchrieser C."/>
            <person name="Wardroper A."/>
            <person name="Felder M."/>
            <person name="Thangavelu M."/>
            <person name="Johnson D."/>
            <person name="Knights A."/>
            <person name="Loulseged H."/>
            <person name="Mungall K.L."/>
            <person name="Oliver K."/>
            <person name="Price C."/>
            <person name="Quail M.A."/>
            <person name="Urushihara H."/>
            <person name="Hernandez J."/>
            <person name="Rabbinowitsch E."/>
            <person name="Steffen D."/>
            <person name="Sanders M."/>
            <person name="Ma J."/>
            <person name="Kohara Y."/>
            <person name="Sharp S."/>
            <person name="Simmonds M.N."/>
            <person name="Spiegler S."/>
            <person name="Tivey A."/>
            <person name="Sugano S."/>
            <person name="White B."/>
            <person name="Walker D."/>
            <person name="Woodward J.R."/>
            <person name="Winckler T."/>
            <person name="Tanaka Y."/>
            <person name="Shaulsky G."/>
            <person name="Schleicher M."/>
            <person name="Weinstock G.M."/>
            <person name="Rosenthal A."/>
            <person name="Cox E.C."/>
            <person name="Chisholm R.L."/>
            <person name="Gibbs R.A."/>
            <person name="Loomis W.F."/>
            <person name="Platzer M."/>
            <person name="Kay R.R."/>
            <person name="Williams J.G."/>
            <person name="Dear P.H."/>
            <person name="Noegel A.A."/>
            <person name="Barrell B.G."/>
            <person name="Kuspa A."/>
        </authorList>
    </citation>
    <scope>NUCLEOTIDE SEQUENCE [LARGE SCALE GENOMIC DNA]</scope>
    <source>
        <strain>AX4</strain>
    </source>
</reference>
<evidence type="ECO:0000255" key="1">
    <source>
        <dbReference type="PROSITE-ProRule" id="PRU00159"/>
    </source>
</evidence>
<evidence type="ECO:0000255" key="2">
    <source>
        <dbReference type="PROSITE-ProRule" id="PRU00171"/>
    </source>
</evidence>
<evidence type="ECO:0000255" key="3">
    <source>
        <dbReference type="PROSITE-ProRule" id="PRU00172"/>
    </source>
</evidence>
<evidence type="ECO:0000255" key="4">
    <source>
        <dbReference type="PROSITE-ProRule" id="PRU00758"/>
    </source>
</evidence>
<evidence type="ECO:0000256" key="5">
    <source>
        <dbReference type="SAM" id="MobiDB-lite"/>
    </source>
</evidence>
<evidence type="ECO:0000305" key="6"/>
<dbReference type="EMBL" id="AY232272">
    <property type="protein sequence ID" value="AAO83655.1"/>
    <property type="molecule type" value="Genomic_DNA"/>
</dbReference>
<dbReference type="EMBL" id="AAFI02000181">
    <property type="protein sequence ID" value="EAL61591.1"/>
    <property type="molecule type" value="Genomic_DNA"/>
</dbReference>
<dbReference type="RefSeq" id="XP_630003.1">
    <property type="nucleotide sequence ID" value="XM_630001.1"/>
</dbReference>
<dbReference type="SMR" id="Q6XHA6"/>
<dbReference type="FunCoup" id="Q6XHA6">
    <property type="interactions" value="243"/>
</dbReference>
<dbReference type="STRING" id="44689.Q6XHA6"/>
<dbReference type="GlyGen" id="Q6XHA6">
    <property type="glycosylation" value="1 site"/>
</dbReference>
<dbReference type="PaxDb" id="44689-DDB0201665"/>
<dbReference type="EnsemblProtists" id="EAL61591">
    <property type="protein sequence ID" value="EAL61591"/>
    <property type="gene ID" value="DDB_G0291710"/>
</dbReference>
<dbReference type="GeneID" id="8628293"/>
<dbReference type="KEGG" id="ddi:DDB_G0291710"/>
<dbReference type="dictyBase" id="DDB_G0291710">
    <property type="gene designation" value="roco10"/>
</dbReference>
<dbReference type="VEuPathDB" id="AmoebaDB:DDB_G0291710"/>
<dbReference type="eggNOG" id="KOG0192">
    <property type="taxonomic scope" value="Eukaryota"/>
</dbReference>
<dbReference type="eggNOG" id="KOG0619">
    <property type="taxonomic scope" value="Eukaryota"/>
</dbReference>
<dbReference type="HOGENOM" id="CLU_227627_0_0_1"/>
<dbReference type="InParanoid" id="Q6XHA6"/>
<dbReference type="OMA" id="MELHNEP"/>
<dbReference type="PRO" id="PR:Q6XHA6"/>
<dbReference type="Proteomes" id="UP000002195">
    <property type="component" value="Chromosome 6"/>
</dbReference>
<dbReference type="GO" id="GO:0005524">
    <property type="term" value="F:ATP binding"/>
    <property type="evidence" value="ECO:0007669"/>
    <property type="project" value="UniProtKB-KW"/>
</dbReference>
<dbReference type="GO" id="GO:0005096">
    <property type="term" value="F:GTPase activator activity"/>
    <property type="evidence" value="ECO:0007669"/>
    <property type="project" value="UniProtKB-KW"/>
</dbReference>
<dbReference type="GO" id="GO:0004672">
    <property type="term" value="F:protein kinase activity"/>
    <property type="evidence" value="ECO:0007669"/>
    <property type="project" value="InterPro"/>
</dbReference>
<dbReference type="GO" id="GO:1902236">
    <property type="term" value="P:negative regulation of endoplasmic reticulum stress-induced intrinsic apoptotic signaling pathway"/>
    <property type="evidence" value="ECO:0000318"/>
    <property type="project" value="GO_Central"/>
</dbReference>
<dbReference type="GO" id="GO:0007165">
    <property type="term" value="P:signal transduction"/>
    <property type="evidence" value="ECO:0007669"/>
    <property type="project" value="InterPro"/>
</dbReference>
<dbReference type="GO" id="GO:0048489">
    <property type="term" value="P:synaptic vesicle transport"/>
    <property type="evidence" value="ECO:0000318"/>
    <property type="project" value="GO_Central"/>
</dbReference>
<dbReference type="CDD" id="cd08734">
    <property type="entry name" value="RGS-like_1"/>
    <property type="match status" value="1"/>
</dbReference>
<dbReference type="CDD" id="cd00159">
    <property type="entry name" value="RhoGAP"/>
    <property type="match status" value="1"/>
</dbReference>
<dbReference type="FunFam" id="1.10.510.10:FF:002721">
    <property type="match status" value="1"/>
</dbReference>
<dbReference type="FunFam" id="3.40.50.300:FF:005593">
    <property type="entry name" value="Probable inactive serine/threonine-protein kinase roco10"/>
    <property type="match status" value="1"/>
</dbReference>
<dbReference type="FunFam" id="3.80.10.10:FF:002523">
    <property type="entry name" value="Probable inactive serine/threonine-protein kinase roco10"/>
    <property type="match status" value="1"/>
</dbReference>
<dbReference type="Gene3D" id="3.40.50.300">
    <property type="entry name" value="P-loop containing nucleotide triphosphate hydrolases"/>
    <property type="match status" value="1"/>
</dbReference>
<dbReference type="Gene3D" id="3.30.200.20">
    <property type="entry name" value="Phosphorylase Kinase, domain 1"/>
    <property type="match status" value="1"/>
</dbReference>
<dbReference type="Gene3D" id="1.10.167.10">
    <property type="entry name" value="Regulator of G-protein Signalling 4, domain 2"/>
    <property type="match status" value="1"/>
</dbReference>
<dbReference type="Gene3D" id="1.10.555.10">
    <property type="entry name" value="Rho GTPase activation protein"/>
    <property type="match status" value="1"/>
</dbReference>
<dbReference type="Gene3D" id="3.80.10.10">
    <property type="entry name" value="Ribonuclease Inhibitor"/>
    <property type="match status" value="1"/>
</dbReference>
<dbReference type="Gene3D" id="3.30.70.1390">
    <property type="entry name" value="ROC domain from the Parkinson's disease-associated leucine-rich repeat kinase 2"/>
    <property type="match status" value="1"/>
</dbReference>
<dbReference type="Gene3D" id="1.10.510.10">
    <property type="entry name" value="Transferase(Phosphotransferase) domain 1"/>
    <property type="match status" value="1"/>
</dbReference>
<dbReference type="InterPro" id="IPR011043">
    <property type="entry name" value="Gal_Oxase/kelch_b-propeller"/>
</dbReference>
<dbReference type="InterPro" id="IPR011009">
    <property type="entry name" value="Kinase-like_dom_sf"/>
</dbReference>
<dbReference type="InterPro" id="IPR001611">
    <property type="entry name" value="Leu-rich_rpt"/>
</dbReference>
<dbReference type="InterPro" id="IPR003591">
    <property type="entry name" value="Leu-rich_rpt_typical-subtyp"/>
</dbReference>
<dbReference type="InterPro" id="IPR032675">
    <property type="entry name" value="LRR_dom_sf"/>
</dbReference>
<dbReference type="InterPro" id="IPR027417">
    <property type="entry name" value="P-loop_NTPase"/>
</dbReference>
<dbReference type="InterPro" id="IPR050647">
    <property type="entry name" value="Plant_LRR-RLKs"/>
</dbReference>
<dbReference type="InterPro" id="IPR000719">
    <property type="entry name" value="Prot_kinase_dom"/>
</dbReference>
<dbReference type="InterPro" id="IPR016137">
    <property type="entry name" value="RGS"/>
</dbReference>
<dbReference type="InterPro" id="IPR036305">
    <property type="entry name" value="RGS_sf"/>
</dbReference>
<dbReference type="InterPro" id="IPR044926">
    <property type="entry name" value="RGS_subdomain_2"/>
</dbReference>
<dbReference type="InterPro" id="IPR008936">
    <property type="entry name" value="Rho_GTPase_activation_prot"/>
</dbReference>
<dbReference type="InterPro" id="IPR000198">
    <property type="entry name" value="RhoGAP_dom"/>
</dbReference>
<dbReference type="InterPro" id="IPR020859">
    <property type="entry name" value="ROC"/>
</dbReference>
<dbReference type="InterPro" id="IPR001245">
    <property type="entry name" value="Ser-Thr/Tyr_kinase_cat_dom"/>
</dbReference>
<dbReference type="PANTHER" id="PTHR48056">
    <property type="entry name" value="LRR RECEPTOR-LIKE SERINE/THREONINE-PROTEIN KINASE-RELATED"/>
    <property type="match status" value="1"/>
</dbReference>
<dbReference type="PANTHER" id="PTHR48056:SF81">
    <property type="entry name" value="RECEPTOR PROTEIN-TYROSINE KINASE CEPR1"/>
    <property type="match status" value="1"/>
</dbReference>
<dbReference type="Pfam" id="PF25497">
    <property type="entry name" value="COR-B"/>
    <property type="match status" value="1"/>
</dbReference>
<dbReference type="Pfam" id="PF24681">
    <property type="entry name" value="Kelch_KLHDC2_KLHL20_DRC7"/>
    <property type="match status" value="1"/>
</dbReference>
<dbReference type="Pfam" id="PF00560">
    <property type="entry name" value="LRR_1"/>
    <property type="match status" value="1"/>
</dbReference>
<dbReference type="Pfam" id="PF13855">
    <property type="entry name" value="LRR_8"/>
    <property type="match status" value="2"/>
</dbReference>
<dbReference type="Pfam" id="PF07714">
    <property type="entry name" value="PK_Tyr_Ser-Thr"/>
    <property type="match status" value="1"/>
</dbReference>
<dbReference type="Pfam" id="PF00615">
    <property type="entry name" value="RGS"/>
    <property type="match status" value="1"/>
</dbReference>
<dbReference type="Pfam" id="PF00620">
    <property type="entry name" value="RhoGAP"/>
    <property type="match status" value="1"/>
</dbReference>
<dbReference type="PRINTS" id="PR01301">
    <property type="entry name" value="RGSPROTEIN"/>
</dbReference>
<dbReference type="SMART" id="SM00364">
    <property type="entry name" value="LRR_BAC"/>
    <property type="match status" value="7"/>
</dbReference>
<dbReference type="SMART" id="SM00365">
    <property type="entry name" value="LRR_SD22"/>
    <property type="match status" value="5"/>
</dbReference>
<dbReference type="SMART" id="SM00369">
    <property type="entry name" value="LRR_TYP"/>
    <property type="match status" value="9"/>
</dbReference>
<dbReference type="SMART" id="SM00315">
    <property type="entry name" value="RGS"/>
    <property type="match status" value="1"/>
</dbReference>
<dbReference type="SMART" id="SM00324">
    <property type="entry name" value="RhoGAP"/>
    <property type="match status" value="1"/>
</dbReference>
<dbReference type="SUPFAM" id="SSF50965">
    <property type="entry name" value="Galactose oxidase, central domain"/>
    <property type="match status" value="1"/>
</dbReference>
<dbReference type="SUPFAM" id="SSF48350">
    <property type="entry name" value="GTPase activation domain, GAP"/>
    <property type="match status" value="1"/>
</dbReference>
<dbReference type="SUPFAM" id="SSF52058">
    <property type="entry name" value="L domain-like"/>
    <property type="match status" value="1"/>
</dbReference>
<dbReference type="SUPFAM" id="SSF52540">
    <property type="entry name" value="P-loop containing nucleoside triphosphate hydrolases"/>
    <property type="match status" value="1"/>
</dbReference>
<dbReference type="SUPFAM" id="SSF56112">
    <property type="entry name" value="Protein kinase-like (PK-like)"/>
    <property type="match status" value="1"/>
</dbReference>
<dbReference type="SUPFAM" id="SSF48097">
    <property type="entry name" value="Regulator of G-protein signaling, RGS"/>
    <property type="match status" value="1"/>
</dbReference>
<dbReference type="PROSITE" id="PS51450">
    <property type="entry name" value="LRR"/>
    <property type="match status" value="11"/>
</dbReference>
<dbReference type="PROSITE" id="PS50011">
    <property type="entry name" value="PROTEIN_KINASE_DOM"/>
    <property type="match status" value="1"/>
</dbReference>
<dbReference type="PROSITE" id="PS50132">
    <property type="entry name" value="RGS"/>
    <property type="match status" value="1"/>
</dbReference>
<dbReference type="PROSITE" id="PS50238">
    <property type="entry name" value="RHOGAP"/>
    <property type="match status" value="1"/>
</dbReference>
<dbReference type="PROSITE" id="PS51424">
    <property type="entry name" value="ROC"/>
    <property type="match status" value="1"/>
</dbReference>
<gene>
    <name type="primary">roco10</name>
    <name type="ORF">DDB_G0291710</name>
</gene>
<organism>
    <name type="scientific">Dictyostelium discoideum</name>
    <name type="common">Social amoeba</name>
    <dbReference type="NCBI Taxonomy" id="44689"/>
    <lineage>
        <taxon>Eukaryota</taxon>
        <taxon>Amoebozoa</taxon>
        <taxon>Evosea</taxon>
        <taxon>Eumycetozoa</taxon>
        <taxon>Dictyostelia</taxon>
        <taxon>Dictyosteliales</taxon>
        <taxon>Dictyosteliaceae</taxon>
        <taxon>Dictyostelium</taxon>
    </lineage>
</organism>
<keyword id="KW-0067">ATP-binding</keyword>
<keyword id="KW-0343">GTPase activation</keyword>
<keyword id="KW-0433">Leucine-rich repeat</keyword>
<keyword id="KW-0547">Nucleotide-binding</keyword>
<keyword id="KW-1185">Reference proteome</keyword>
<keyword id="KW-0677">Repeat</keyword>
<proteinExistence type="inferred from homology"/>
<accession>Q6XHA6</accession>
<accession>Q54E99</accession>
<comment type="domain">
    <text>The protein kinase domain is predicted to be catalytically inactive.</text>
</comment>
<comment type="similarity">
    <text evidence="6">Belongs to the protein kinase superfamily. TKL Ser/Thr protein kinase family. ROCO subfamily.</text>
</comment>
<name>ROC10_DICDI</name>